<name>ENGB_THISH</name>
<sequence>MNPFYQQARFLISAARPDAFPTDEGMEVAFAGRSNAGKSSAINVLCNQRALARTSKTPGRTQLINFFALDESRRLVDLPGYGYAKVPEAMRKAWRKLMEHYLGERACLKGLVVVMDIRHPLTDHDWTMLGWARERGLAVHVLLTKADKIRRGPAMDTARQVARALGDAGIEATVQPFSALKREGVEDAHGILDQWLGLTAEPEARAASE</sequence>
<feature type="chain" id="PRO_1000189943" description="Probable GTP-binding protein EngB">
    <location>
        <begin position="1"/>
        <end position="209"/>
    </location>
</feature>
<feature type="domain" description="EngB-type G" evidence="1">
    <location>
        <begin position="24"/>
        <end position="198"/>
    </location>
</feature>
<feature type="binding site" evidence="1">
    <location>
        <begin position="32"/>
        <end position="39"/>
    </location>
    <ligand>
        <name>GTP</name>
        <dbReference type="ChEBI" id="CHEBI:37565"/>
    </ligand>
</feature>
<feature type="binding site" evidence="1">
    <location>
        <position position="39"/>
    </location>
    <ligand>
        <name>Mg(2+)</name>
        <dbReference type="ChEBI" id="CHEBI:18420"/>
    </ligand>
</feature>
<feature type="binding site" evidence="1">
    <location>
        <begin position="59"/>
        <end position="63"/>
    </location>
    <ligand>
        <name>GTP</name>
        <dbReference type="ChEBI" id="CHEBI:37565"/>
    </ligand>
</feature>
<feature type="binding site" evidence="1">
    <location>
        <position position="61"/>
    </location>
    <ligand>
        <name>Mg(2+)</name>
        <dbReference type="ChEBI" id="CHEBI:18420"/>
    </ligand>
</feature>
<feature type="binding site" evidence="1">
    <location>
        <begin position="77"/>
        <end position="80"/>
    </location>
    <ligand>
        <name>GTP</name>
        <dbReference type="ChEBI" id="CHEBI:37565"/>
    </ligand>
</feature>
<feature type="binding site" evidence="1">
    <location>
        <begin position="144"/>
        <end position="147"/>
    </location>
    <ligand>
        <name>GTP</name>
        <dbReference type="ChEBI" id="CHEBI:37565"/>
    </ligand>
</feature>
<feature type="binding site" evidence="1">
    <location>
        <begin position="177"/>
        <end position="179"/>
    </location>
    <ligand>
        <name>GTP</name>
        <dbReference type="ChEBI" id="CHEBI:37565"/>
    </ligand>
</feature>
<evidence type="ECO:0000255" key="1">
    <source>
        <dbReference type="HAMAP-Rule" id="MF_00321"/>
    </source>
</evidence>
<accession>B8GTD2</accession>
<dbReference type="EMBL" id="CP001339">
    <property type="protein sequence ID" value="ACL71192.1"/>
    <property type="molecule type" value="Genomic_DNA"/>
</dbReference>
<dbReference type="RefSeq" id="WP_012636681.1">
    <property type="nucleotide sequence ID" value="NC_011901.1"/>
</dbReference>
<dbReference type="SMR" id="B8GTD2"/>
<dbReference type="STRING" id="396588.Tgr7_0088"/>
<dbReference type="KEGG" id="tgr:Tgr7_0088"/>
<dbReference type="eggNOG" id="COG0218">
    <property type="taxonomic scope" value="Bacteria"/>
</dbReference>
<dbReference type="HOGENOM" id="CLU_033732_1_0_6"/>
<dbReference type="OrthoDB" id="9804921at2"/>
<dbReference type="Proteomes" id="UP000002383">
    <property type="component" value="Chromosome"/>
</dbReference>
<dbReference type="GO" id="GO:0005829">
    <property type="term" value="C:cytosol"/>
    <property type="evidence" value="ECO:0007669"/>
    <property type="project" value="TreeGrafter"/>
</dbReference>
<dbReference type="GO" id="GO:0005525">
    <property type="term" value="F:GTP binding"/>
    <property type="evidence" value="ECO:0007669"/>
    <property type="project" value="UniProtKB-UniRule"/>
</dbReference>
<dbReference type="GO" id="GO:0046872">
    <property type="term" value="F:metal ion binding"/>
    <property type="evidence" value="ECO:0007669"/>
    <property type="project" value="UniProtKB-KW"/>
</dbReference>
<dbReference type="GO" id="GO:0000917">
    <property type="term" value="P:division septum assembly"/>
    <property type="evidence" value="ECO:0007669"/>
    <property type="project" value="UniProtKB-KW"/>
</dbReference>
<dbReference type="CDD" id="cd01876">
    <property type="entry name" value="YihA_EngB"/>
    <property type="match status" value="1"/>
</dbReference>
<dbReference type="FunFam" id="3.40.50.300:FF:000098">
    <property type="entry name" value="Probable GTP-binding protein EngB"/>
    <property type="match status" value="1"/>
</dbReference>
<dbReference type="Gene3D" id="3.40.50.300">
    <property type="entry name" value="P-loop containing nucleotide triphosphate hydrolases"/>
    <property type="match status" value="1"/>
</dbReference>
<dbReference type="HAMAP" id="MF_00321">
    <property type="entry name" value="GTPase_EngB"/>
    <property type="match status" value="1"/>
</dbReference>
<dbReference type="InterPro" id="IPR030393">
    <property type="entry name" value="G_ENGB_dom"/>
</dbReference>
<dbReference type="InterPro" id="IPR006073">
    <property type="entry name" value="GTP-bd"/>
</dbReference>
<dbReference type="InterPro" id="IPR019987">
    <property type="entry name" value="GTP-bd_ribosome_bio_YsxC"/>
</dbReference>
<dbReference type="InterPro" id="IPR027417">
    <property type="entry name" value="P-loop_NTPase"/>
</dbReference>
<dbReference type="NCBIfam" id="TIGR03598">
    <property type="entry name" value="GTPase_YsxC"/>
    <property type="match status" value="1"/>
</dbReference>
<dbReference type="PANTHER" id="PTHR11649:SF13">
    <property type="entry name" value="ENGB-TYPE G DOMAIN-CONTAINING PROTEIN"/>
    <property type="match status" value="1"/>
</dbReference>
<dbReference type="PANTHER" id="PTHR11649">
    <property type="entry name" value="MSS1/TRME-RELATED GTP-BINDING PROTEIN"/>
    <property type="match status" value="1"/>
</dbReference>
<dbReference type="Pfam" id="PF01926">
    <property type="entry name" value="MMR_HSR1"/>
    <property type="match status" value="1"/>
</dbReference>
<dbReference type="SUPFAM" id="SSF52540">
    <property type="entry name" value="P-loop containing nucleoside triphosphate hydrolases"/>
    <property type="match status" value="1"/>
</dbReference>
<dbReference type="PROSITE" id="PS51706">
    <property type="entry name" value="G_ENGB"/>
    <property type="match status" value="1"/>
</dbReference>
<gene>
    <name evidence="1" type="primary">engB</name>
    <name type="ordered locus">Tgr7_0088</name>
</gene>
<comment type="function">
    <text evidence="1">Necessary for normal cell division and for the maintenance of normal septation.</text>
</comment>
<comment type="cofactor">
    <cofactor evidence="1">
        <name>Mg(2+)</name>
        <dbReference type="ChEBI" id="CHEBI:18420"/>
    </cofactor>
</comment>
<comment type="similarity">
    <text evidence="1">Belongs to the TRAFAC class TrmE-Era-EngA-EngB-Septin-like GTPase superfamily. EngB GTPase family.</text>
</comment>
<protein>
    <recommendedName>
        <fullName evidence="1">Probable GTP-binding protein EngB</fullName>
    </recommendedName>
</protein>
<reference key="1">
    <citation type="journal article" date="2011" name="Stand. Genomic Sci.">
        <title>Complete genome sequence of 'Thioalkalivibrio sulfidophilus' HL-EbGr7.</title>
        <authorList>
            <person name="Muyzer G."/>
            <person name="Sorokin D.Y."/>
            <person name="Mavromatis K."/>
            <person name="Lapidus A."/>
            <person name="Clum A."/>
            <person name="Ivanova N."/>
            <person name="Pati A."/>
            <person name="d'Haeseleer P."/>
            <person name="Woyke T."/>
            <person name="Kyrpides N.C."/>
        </authorList>
    </citation>
    <scope>NUCLEOTIDE SEQUENCE [LARGE SCALE GENOMIC DNA]</scope>
    <source>
        <strain>HL-EbGR7</strain>
    </source>
</reference>
<keyword id="KW-0131">Cell cycle</keyword>
<keyword id="KW-0132">Cell division</keyword>
<keyword id="KW-0342">GTP-binding</keyword>
<keyword id="KW-0460">Magnesium</keyword>
<keyword id="KW-0479">Metal-binding</keyword>
<keyword id="KW-0547">Nucleotide-binding</keyword>
<keyword id="KW-1185">Reference proteome</keyword>
<keyword id="KW-0717">Septation</keyword>
<proteinExistence type="inferred from homology"/>
<organism>
    <name type="scientific">Thioalkalivibrio sulfidiphilus (strain HL-EbGR7)</name>
    <dbReference type="NCBI Taxonomy" id="396588"/>
    <lineage>
        <taxon>Bacteria</taxon>
        <taxon>Pseudomonadati</taxon>
        <taxon>Pseudomonadota</taxon>
        <taxon>Gammaproteobacteria</taxon>
        <taxon>Chromatiales</taxon>
        <taxon>Ectothiorhodospiraceae</taxon>
        <taxon>Thioalkalivibrio</taxon>
    </lineage>
</organism>